<sequence>MLCEDQHMSVENTPQKGSGSLNSSASSISIDVKPTMQSWAQEVRAEFGHSDEASSSLNSSAASCGSLAKKETADGNLESKDGEGREMAFEFLDGVNEVKFERLVKEEKLKTPYKRRHSFTPPSNENSRSNSPNSSNSSANGDAAAPKGGNNPHSRNSKKSGNFRAHKEEKRVRHNSYTSSTSSSSSYTEADPAILSRRQKQIDYGKNTAAYERYVEMVPKDERTRDHPRTPNKYGKYSRRAFDGLVKIWRKSLHIYDPPTQARDTAKDSNSDSDSD</sequence>
<comment type="function">
    <text evidence="3 5">Involved in histone pre-mRNA 3' processing and couples histone mRNA production with the cell cycle. Both maternal and zygotic proteins play an essential and vital function for development.</text>
</comment>
<comment type="subunit">
    <text evidence="5">Interacts with Sym and Cpsf73.</text>
</comment>
<comment type="tissue specificity">
    <text>In late embryos, expression is restricted to proliferating (CNS and PNS) and endoreplicating (midgut) cell populations.</text>
</comment>
<comment type="developmental stage">
    <text evidence="3">Expressed both zygotically and maternally. Expression is highest in early embryos and adult females.</text>
</comment>
<comment type="similarity">
    <text evidence="6">Belongs to the SLBP family.</text>
</comment>
<feature type="chain" id="PRO_0000100361" description="Histone RNA hairpin-binding protein">
    <location>
        <begin position="1"/>
        <end position="276"/>
    </location>
</feature>
<feature type="region of interest" description="Disordered" evidence="2">
    <location>
        <begin position="1"/>
        <end position="35"/>
    </location>
</feature>
<feature type="region of interest" description="Disordered" evidence="2">
    <location>
        <begin position="50"/>
        <end position="83"/>
    </location>
</feature>
<feature type="region of interest" description="Disordered" evidence="2">
    <location>
        <begin position="104"/>
        <end position="236"/>
    </location>
</feature>
<feature type="region of interest" description="RNA-binding" evidence="1">
    <location>
        <begin position="191"/>
        <end position="260"/>
    </location>
</feature>
<feature type="region of interest" description="Disordered" evidence="2">
    <location>
        <begin position="254"/>
        <end position="276"/>
    </location>
</feature>
<feature type="compositionally biased region" description="Low complexity" evidence="2">
    <location>
        <begin position="18"/>
        <end position="29"/>
    </location>
</feature>
<feature type="compositionally biased region" description="Low complexity" evidence="2">
    <location>
        <begin position="53"/>
        <end position="67"/>
    </location>
</feature>
<feature type="compositionally biased region" description="Basic and acidic residues" evidence="2">
    <location>
        <begin position="68"/>
        <end position="83"/>
    </location>
</feature>
<feature type="compositionally biased region" description="Low complexity" evidence="2">
    <location>
        <begin position="121"/>
        <end position="146"/>
    </location>
</feature>
<feature type="compositionally biased region" description="Low complexity" evidence="2">
    <location>
        <begin position="176"/>
        <end position="188"/>
    </location>
</feature>
<feature type="compositionally biased region" description="Basic and acidic residues" evidence="2">
    <location>
        <begin position="213"/>
        <end position="229"/>
    </location>
</feature>
<feature type="modified residue" description="Phosphoserine" evidence="4">
    <location>
        <position position="24"/>
    </location>
</feature>
<feature type="modified residue" description="Phosphoserine" evidence="4">
    <location>
        <position position="29"/>
    </location>
</feature>
<feature type="modified residue" description="Phosphoserine" evidence="4">
    <location>
        <position position="118"/>
    </location>
</feature>
<feature type="modified residue" description="Phosphothreonine" evidence="4">
    <location>
        <position position="120"/>
    </location>
</feature>
<feature type="modified residue" description="Phosphoserine" evidence="4">
    <location>
        <position position="123"/>
    </location>
</feature>
<feature type="modified residue" description="Phosphoserine" evidence="4">
    <location>
        <position position="127"/>
    </location>
</feature>
<feature type="modified residue" description="Phosphoserine" evidence="4">
    <location>
        <position position="131"/>
    </location>
</feature>
<feature type="modified residue" description="Phosphotyrosine" evidence="4">
    <location>
        <position position="177"/>
    </location>
</feature>
<feature type="modified residue" description="Phosphoserine" evidence="4">
    <location>
        <position position="182"/>
    </location>
</feature>
<feature type="sequence conflict" description="In Ref. 1; AAG16723." evidence="6" ref="1">
    <original>C</original>
    <variation>G</variation>
    <location>
        <position position="3"/>
    </location>
</feature>
<feature type="sequence conflict" description="In Ref. 1; AAG16723." evidence="6" ref="1">
    <original>G</original>
    <variation>C</variation>
    <location>
        <position position="82"/>
    </location>
</feature>
<feature type="helix" evidence="8">
    <location>
        <begin position="192"/>
        <end position="205"/>
    </location>
</feature>
<feature type="helix" evidence="7">
    <location>
        <begin position="209"/>
        <end position="212"/>
    </location>
</feature>
<feature type="strand" evidence="7">
    <location>
        <begin position="225"/>
        <end position="227"/>
    </location>
</feature>
<feature type="helix" evidence="8">
    <location>
        <begin position="239"/>
        <end position="250"/>
    </location>
</feature>
<feature type="helix" evidence="7">
    <location>
        <begin position="254"/>
        <end position="256"/>
    </location>
</feature>
<organism>
    <name type="scientific">Drosophila melanogaster</name>
    <name type="common">Fruit fly</name>
    <dbReference type="NCBI Taxonomy" id="7227"/>
    <lineage>
        <taxon>Eukaryota</taxon>
        <taxon>Metazoa</taxon>
        <taxon>Ecdysozoa</taxon>
        <taxon>Arthropoda</taxon>
        <taxon>Hexapoda</taxon>
        <taxon>Insecta</taxon>
        <taxon>Pterygota</taxon>
        <taxon>Neoptera</taxon>
        <taxon>Endopterygota</taxon>
        <taxon>Diptera</taxon>
        <taxon>Brachycera</taxon>
        <taxon>Muscomorpha</taxon>
        <taxon>Ephydroidea</taxon>
        <taxon>Drosophilidae</taxon>
        <taxon>Drosophila</taxon>
        <taxon>Sophophora</taxon>
    </lineage>
</organism>
<reference key="1">
    <citation type="journal article" date="2001" name="Genes Dev.">
        <title>Drosophila stem loop binding protein coordinates accumulation of mature histone mRNA with cell cycle progression.</title>
        <authorList>
            <person name="Sullivan E.O."/>
            <person name="Santiago C."/>
            <person name="Parker E.D."/>
            <person name="Dominski Z."/>
            <person name="Yang X."/>
            <person name="Lanzotti D.J."/>
            <person name="Ingledue T.C."/>
            <person name="Marzluff W.F."/>
            <person name="Duronio R.J."/>
        </authorList>
    </citation>
    <scope>NUCLEOTIDE SEQUENCE</scope>
    <scope>FUNCTION</scope>
    <scope>DEVELOPMENTAL STAGE</scope>
    <source>
        <strain>Oregon-R</strain>
        <tissue>Embryo</tissue>
    </source>
</reference>
<reference key="2">
    <citation type="journal article" date="2000" name="Science">
        <title>The genome sequence of Drosophila melanogaster.</title>
        <authorList>
            <person name="Adams M.D."/>
            <person name="Celniker S.E."/>
            <person name="Holt R.A."/>
            <person name="Evans C.A."/>
            <person name="Gocayne J.D."/>
            <person name="Amanatides P.G."/>
            <person name="Scherer S.E."/>
            <person name="Li P.W."/>
            <person name="Hoskins R.A."/>
            <person name="Galle R.F."/>
            <person name="George R.A."/>
            <person name="Lewis S.E."/>
            <person name="Richards S."/>
            <person name="Ashburner M."/>
            <person name="Henderson S.N."/>
            <person name="Sutton G.G."/>
            <person name="Wortman J.R."/>
            <person name="Yandell M.D."/>
            <person name="Zhang Q."/>
            <person name="Chen L.X."/>
            <person name="Brandon R.C."/>
            <person name="Rogers Y.-H.C."/>
            <person name="Blazej R.G."/>
            <person name="Champe M."/>
            <person name="Pfeiffer B.D."/>
            <person name="Wan K.H."/>
            <person name="Doyle C."/>
            <person name="Baxter E.G."/>
            <person name="Helt G."/>
            <person name="Nelson C.R."/>
            <person name="Miklos G.L.G."/>
            <person name="Abril J.F."/>
            <person name="Agbayani A."/>
            <person name="An H.-J."/>
            <person name="Andrews-Pfannkoch C."/>
            <person name="Baldwin D."/>
            <person name="Ballew R.M."/>
            <person name="Basu A."/>
            <person name="Baxendale J."/>
            <person name="Bayraktaroglu L."/>
            <person name="Beasley E.M."/>
            <person name="Beeson K.Y."/>
            <person name="Benos P.V."/>
            <person name="Berman B.P."/>
            <person name="Bhandari D."/>
            <person name="Bolshakov S."/>
            <person name="Borkova D."/>
            <person name="Botchan M.R."/>
            <person name="Bouck J."/>
            <person name="Brokstein P."/>
            <person name="Brottier P."/>
            <person name="Burtis K.C."/>
            <person name="Busam D.A."/>
            <person name="Butler H."/>
            <person name="Cadieu E."/>
            <person name="Center A."/>
            <person name="Chandra I."/>
            <person name="Cherry J.M."/>
            <person name="Cawley S."/>
            <person name="Dahlke C."/>
            <person name="Davenport L.B."/>
            <person name="Davies P."/>
            <person name="de Pablos B."/>
            <person name="Delcher A."/>
            <person name="Deng Z."/>
            <person name="Mays A.D."/>
            <person name="Dew I."/>
            <person name="Dietz S.M."/>
            <person name="Dodson K."/>
            <person name="Doup L.E."/>
            <person name="Downes M."/>
            <person name="Dugan-Rocha S."/>
            <person name="Dunkov B.C."/>
            <person name="Dunn P."/>
            <person name="Durbin K.J."/>
            <person name="Evangelista C.C."/>
            <person name="Ferraz C."/>
            <person name="Ferriera S."/>
            <person name="Fleischmann W."/>
            <person name="Fosler C."/>
            <person name="Gabrielian A.E."/>
            <person name="Garg N.S."/>
            <person name="Gelbart W.M."/>
            <person name="Glasser K."/>
            <person name="Glodek A."/>
            <person name="Gong F."/>
            <person name="Gorrell J.H."/>
            <person name="Gu Z."/>
            <person name="Guan P."/>
            <person name="Harris M."/>
            <person name="Harris N.L."/>
            <person name="Harvey D.A."/>
            <person name="Heiman T.J."/>
            <person name="Hernandez J.R."/>
            <person name="Houck J."/>
            <person name="Hostin D."/>
            <person name="Houston K.A."/>
            <person name="Howland T.J."/>
            <person name="Wei M.-H."/>
            <person name="Ibegwam C."/>
            <person name="Jalali M."/>
            <person name="Kalush F."/>
            <person name="Karpen G.H."/>
            <person name="Ke Z."/>
            <person name="Kennison J.A."/>
            <person name="Ketchum K.A."/>
            <person name="Kimmel B.E."/>
            <person name="Kodira C.D."/>
            <person name="Kraft C.L."/>
            <person name="Kravitz S."/>
            <person name="Kulp D."/>
            <person name="Lai Z."/>
            <person name="Lasko P."/>
            <person name="Lei Y."/>
            <person name="Levitsky A.A."/>
            <person name="Li J.H."/>
            <person name="Li Z."/>
            <person name="Liang Y."/>
            <person name="Lin X."/>
            <person name="Liu X."/>
            <person name="Mattei B."/>
            <person name="McIntosh T.C."/>
            <person name="McLeod M.P."/>
            <person name="McPherson D."/>
            <person name="Merkulov G."/>
            <person name="Milshina N.V."/>
            <person name="Mobarry C."/>
            <person name="Morris J."/>
            <person name="Moshrefi A."/>
            <person name="Mount S.M."/>
            <person name="Moy M."/>
            <person name="Murphy B."/>
            <person name="Murphy L."/>
            <person name="Muzny D.M."/>
            <person name="Nelson D.L."/>
            <person name="Nelson D.R."/>
            <person name="Nelson K.A."/>
            <person name="Nixon K."/>
            <person name="Nusskern D.R."/>
            <person name="Pacleb J.M."/>
            <person name="Palazzolo M."/>
            <person name="Pittman G.S."/>
            <person name="Pan S."/>
            <person name="Pollard J."/>
            <person name="Puri V."/>
            <person name="Reese M.G."/>
            <person name="Reinert K."/>
            <person name="Remington K."/>
            <person name="Saunders R.D.C."/>
            <person name="Scheeler F."/>
            <person name="Shen H."/>
            <person name="Shue B.C."/>
            <person name="Siden-Kiamos I."/>
            <person name="Simpson M."/>
            <person name="Skupski M.P."/>
            <person name="Smith T.J."/>
            <person name="Spier E."/>
            <person name="Spradling A.C."/>
            <person name="Stapleton M."/>
            <person name="Strong R."/>
            <person name="Sun E."/>
            <person name="Svirskas R."/>
            <person name="Tector C."/>
            <person name="Turner R."/>
            <person name="Venter E."/>
            <person name="Wang A.H."/>
            <person name="Wang X."/>
            <person name="Wang Z.-Y."/>
            <person name="Wassarman D.A."/>
            <person name="Weinstock G.M."/>
            <person name="Weissenbach J."/>
            <person name="Williams S.M."/>
            <person name="Woodage T."/>
            <person name="Worley K.C."/>
            <person name="Wu D."/>
            <person name="Yang S."/>
            <person name="Yao Q.A."/>
            <person name="Ye J."/>
            <person name="Yeh R.-F."/>
            <person name="Zaveri J.S."/>
            <person name="Zhan M."/>
            <person name="Zhang G."/>
            <person name="Zhao Q."/>
            <person name="Zheng L."/>
            <person name="Zheng X.H."/>
            <person name="Zhong F.N."/>
            <person name="Zhong W."/>
            <person name="Zhou X."/>
            <person name="Zhu S.C."/>
            <person name="Zhu X."/>
            <person name="Smith H.O."/>
            <person name="Gibbs R.A."/>
            <person name="Myers E.W."/>
            <person name="Rubin G.M."/>
            <person name="Venter J.C."/>
        </authorList>
    </citation>
    <scope>NUCLEOTIDE SEQUENCE [LARGE SCALE GENOMIC DNA]</scope>
    <source>
        <strain>Berkeley</strain>
    </source>
</reference>
<reference key="3">
    <citation type="journal article" date="2002" name="Genome Biol.">
        <title>Annotation of the Drosophila melanogaster euchromatic genome: a systematic review.</title>
        <authorList>
            <person name="Misra S."/>
            <person name="Crosby M.A."/>
            <person name="Mungall C.J."/>
            <person name="Matthews B.B."/>
            <person name="Campbell K.S."/>
            <person name="Hradecky P."/>
            <person name="Huang Y."/>
            <person name="Kaminker J.S."/>
            <person name="Millburn G.H."/>
            <person name="Prochnik S.E."/>
            <person name="Smith C.D."/>
            <person name="Tupy J.L."/>
            <person name="Whitfield E.J."/>
            <person name="Bayraktaroglu L."/>
            <person name="Berman B.P."/>
            <person name="Bettencourt B.R."/>
            <person name="Celniker S.E."/>
            <person name="de Grey A.D.N.J."/>
            <person name="Drysdale R.A."/>
            <person name="Harris N.L."/>
            <person name="Richter J."/>
            <person name="Russo S."/>
            <person name="Schroeder A.J."/>
            <person name="Shu S.Q."/>
            <person name="Stapleton M."/>
            <person name="Yamada C."/>
            <person name="Ashburner M."/>
            <person name="Gelbart W.M."/>
            <person name="Rubin G.M."/>
            <person name="Lewis S.E."/>
        </authorList>
    </citation>
    <scope>GENOME REANNOTATION</scope>
    <source>
        <strain>Berkeley</strain>
    </source>
</reference>
<reference key="4">
    <citation type="journal article" date="2002" name="Genome Biol.">
        <title>A Drosophila full-length cDNA resource.</title>
        <authorList>
            <person name="Stapleton M."/>
            <person name="Carlson J.W."/>
            <person name="Brokstein P."/>
            <person name="Yu C."/>
            <person name="Champe M."/>
            <person name="George R.A."/>
            <person name="Guarin H."/>
            <person name="Kronmiller B."/>
            <person name="Pacleb J.M."/>
            <person name="Park S."/>
            <person name="Wan K.H."/>
            <person name="Rubin G.M."/>
            <person name="Celniker S.E."/>
        </authorList>
    </citation>
    <scope>NUCLEOTIDE SEQUENCE [LARGE SCALE MRNA]</scope>
    <source>
        <strain>Berkeley</strain>
        <tissue>Head</tissue>
        <tissue>Ovary</tissue>
    </source>
</reference>
<reference key="5">
    <citation type="journal article" date="2008" name="J. Proteome Res.">
        <title>Phosphoproteome analysis of Drosophila melanogaster embryos.</title>
        <authorList>
            <person name="Zhai B."/>
            <person name="Villen J."/>
            <person name="Beausoleil S.A."/>
            <person name="Mintseris J."/>
            <person name="Gygi S.P."/>
        </authorList>
    </citation>
    <scope>PHOSPHORYLATION [LARGE SCALE ANALYSIS] AT SER-24; SER-29; SER-118; THR-120; SER-123; SER-127; SER-131; TYR-177 AND SER-182</scope>
    <scope>IDENTIFICATION BY MASS SPECTROMETRY</scope>
    <source>
        <tissue>Embryo</tissue>
    </source>
</reference>
<reference key="6">
    <citation type="journal article" date="2009" name="Mol. Cell">
        <title>A core complex of CPSF73, CPSF100, and Symplekin may form two different cleavage factors for processing of poly(A) and histone mRNAs.</title>
        <authorList>
            <person name="Sullivan K.D."/>
            <person name="Steiniger M."/>
            <person name="Marzluff W.F."/>
        </authorList>
    </citation>
    <scope>FUNCTION</scope>
    <scope>INTERACTION WITH SYM AND CPSF73</scope>
</reference>
<evidence type="ECO:0000250" key="1"/>
<evidence type="ECO:0000256" key="2">
    <source>
        <dbReference type="SAM" id="MobiDB-lite"/>
    </source>
</evidence>
<evidence type="ECO:0000269" key="3">
    <source>
    </source>
</evidence>
<evidence type="ECO:0000269" key="4">
    <source>
    </source>
</evidence>
<evidence type="ECO:0000269" key="5">
    <source>
    </source>
</evidence>
<evidence type="ECO:0000305" key="6"/>
<evidence type="ECO:0007829" key="7">
    <source>
        <dbReference type="PDB" id="4TUW"/>
    </source>
</evidence>
<evidence type="ECO:0007829" key="8">
    <source>
        <dbReference type="PDB" id="4TV0"/>
    </source>
</evidence>
<accession>Q9VAN6</accession>
<accession>Q9GU71</accession>
<proteinExistence type="evidence at protein level"/>
<protein>
    <recommendedName>
        <fullName>Histone RNA hairpin-binding protein</fullName>
    </recommendedName>
    <alternativeName>
        <fullName>Histone stem-loop-binding protein</fullName>
    </alternativeName>
</protein>
<gene>
    <name type="primary">Slbp</name>
    <name type="ORF">CG11886</name>
</gene>
<keyword id="KW-0002">3D-structure</keyword>
<keyword id="KW-0217">Developmental protein</keyword>
<keyword id="KW-0507">mRNA processing</keyword>
<keyword id="KW-0597">Phosphoprotein</keyword>
<keyword id="KW-1185">Reference proteome</keyword>
<keyword id="KW-0694">RNA-binding</keyword>
<dbReference type="EMBL" id="AF186594">
    <property type="protein sequence ID" value="AAG16723.1"/>
    <property type="molecule type" value="Genomic_DNA"/>
</dbReference>
<dbReference type="EMBL" id="AF258617">
    <property type="protein sequence ID" value="AAF71752.1"/>
    <property type="molecule type" value="mRNA"/>
</dbReference>
<dbReference type="EMBL" id="AE014297">
    <property type="protein sequence ID" value="AAF56867.1"/>
    <property type="molecule type" value="Genomic_DNA"/>
</dbReference>
<dbReference type="EMBL" id="AY089675">
    <property type="protein sequence ID" value="AAL90413.1"/>
    <property type="molecule type" value="mRNA"/>
</dbReference>
<dbReference type="EMBL" id="AY118836">
    <property type="protein sequence ID" value="AAM50696.1"/>
    <property type="molecule type" value="mRNA"/>
</dbReference>
<dbReference type="RefSeq" id="NP_477480.1">
    <property type="nucleotide sequence ID" value="NM_058132.3"/>
</dbReference>
<dbReference type="PDB" id="4TUW">
    <property type="method" value="X-ray"/>
    <property type="resolution" value="2.90 A"/>
    <property type="chains" value="A/B=184-276"/>
</dbReference>
<dbReference type="PDB" id="4TUX">
    <property type="method" value="X-ray"/>
    <property type="resolution" value="3.08 A"/>
    <property type="chains" value="A/B=184-276"/>
</dbReference>
<dbReference type="PDB" id="4TV0">
    <property type="method" value="X-ray"/>
    <property type="resolution" value="2.60 A"/>
    <property type="chains" value="A=184-267"/>
</dbReference>
<dbReference type="PDBsum" id="4TUW"/>
<dbReference type="PDBsum" id="4TUX"/>
<dbReference type="PDBsum" id="4TV0"/>
<dbReference type="BMRB" id="Q9VAN6"/>
<dbReference type="SMR" id="Q9VAN6"/>
<dbReference type="BioGRID" id="68319">
    <property type="interactions" value="8"/>
</dbReference>
<dbReference type="FunCoup" id="Q9VAN6">
    <property type="interactions" value="2010"/>
</dbReference>
<dbReference type="IntAct" id="Q9VAN6">
    <property type="interactions" value="20"/>
</dbReference>
<dbReference type="STRING" id="7227.FBpp0084778"/>
<dbReference type="iPTMnet" id="Q9VAN6"/>
<dbReference type="PaxDb" id="7227-FBpp0084778"/>
<dbReference type="DNASU" id="43448"/>
<dbReference type="EnsemblMetazoa" id="FBtr0085409">
    <property type="protein sequence ID" value="FBpp0084778"/>
    <property type="gene ID" value="FBgn0041186"/>
</dbReference>
<dbReference type="GeneID" id="43448"/>
<dbReference type="KEGG" id="dme:Dmel_CG11886"/>
<dbReference type="AGR" id="FB:FBgn0041186"/>
<dbReference type="CTD" id="7884"/>
<dbReference type="FlyBase" id="FBgn0041186">
    <property type="gene designation" value="Slbp"/>
</dbReference>
<dbReference type="VEuPathDB" id="VectorBase:FBgn0041186"/>
<dbReference type="eggNOG" id="KOG3934">
    <property type="taxonomic scope" value="Eukaryota"/>
</dbReference>
<dbReference type="GeneTree" id="ENSGT00940000170890"/>
<dbReference type="HOGENOM" id="CLU_079454_0_0_1"/>
<dbReference type="InParanoid" id="Q9VAN6"/>
<dbReference type="OMA" id="TPYKRRH"/>
<dbReference type="OrthoDB" id="265795at2759"/>
<dbReference type="PhylomeDB" id="Q9VAN6"/>
<dbReference type="Reactome" id="R-DME-159230">
    <property type="pathway name" value="Transport of the SLBP Dependant Mature mRNA"/>
</dbReference>
<dbReference type="Reactome" id="R-DME-73856">
    <property type="pathway name" value="RNA Polymerase II Transcription Termination"/>
</dbReference>
<dbReference type="Reactome" id="R-DME-77588">
    <property type="pathway name" value="SLBP Dependent Processing of Replication-Dependent Histone Pre-mRNAs"/>
</dbReference>
<dbReference type="BioGRID-ORCS" id="43448">
    <property type="hits" value="0 hits in 1 CRISPR screen"/>
</dbReference>
<dbReference type="EvolutionaryTrace" id="Q9VAN6"/>
<dbReference type="GenomeRNAi" id="43448"/>
<dbReference type="PRO" id="PR:Q9VAN6"/>
<dbReference type="Proteomes" id="UP000000803">
    <property type="component" value="Chromosome 3R"/>
</dbReference>
<dbReference type="Bgee" id="FBgn0041186">
    <property type="expression patterns" value="Expressed in secondary oocyte and 109 other cell types or tissues"/>
</dbReference>
<dbReference type="ExpressionAtlas" id="Q9VAN6">
    <property type="expression patterns" value="baseline and differential"/>
</dbReference>
<dbReference type="GO" id="GO:0005737">
    <property type="term" value="C:cytoplasm"/>
    <property type="evidence" value="ECO:0000314"/>
    <property type="project" value="FlyBase"/>
</dbReference>
<dbReference type="GO" id="GO:0071204">
    <property type="term" value="C:histone pre-mRNA 3'end processing complex"/>
    <property type="evidence" value="ECO:0000318"/>
    <property type="project" value="GO_Central"/>
</dbReference>
<dbReference type="GO" id="GO:0005634">
    <property type="term" value="C:nucleus"/>
    <property type="evidence" value="ECO:0000314"/>
    <property type="project" value="FlyBase"/>
</dbReference>
<dbReference type="GO" id="GO:0071207">
    <property type="term" value="F:histone pre-mRNA stem-loop binding"/>
    <property type="evidence" value="ECO:0000318"/>
    <property type="project" value="GO_Central"/>
</dbReference>
<dbReference type="GO" id="GO:0003729">
    <property type="term" value="F:mRNA binding"/>
    <property type="evidence" value="ECO:0000318"/>
    <property type="project" value="GO_Central"/>
</dbReference>
<dbReference type="GO" id="GO:0035613">
    <property type="term" value="F:RNA stem-loop binding"/>
    <property type="evidence" value="ECO:0000314"/>
    <property type="project" value="FlyBase"/>
</dbReference>
<dbReference type="GO" id="GO:1990825">
    <property type="term" value="F:sequence-specific mRNA binding"/>
    <property type="evidence" value="ECO:0000315"/>
    <property type="project" value="CAFA"/>
</dbReference>
<dbReference type="GO" id="GO:0007076">
    <property type="term" value="P:mitotic chromosome condensation"/>
    <property type="evidence" value="ECO:0000315"/>
    <property type="project" value="FlyBase"/>
</dbReference>
<dbReference type="GO" id="GO:0006398">
    <property type="term" value="P:mRNA 3'-end processing by stem-loop binding and cleavage"/>
    <property type="evidence" value="ECO:0000314"/>
    <property type="project" value="FlyBase"/>
</dbReference>
<dbReference type="GO" id="GO:0051028">
    <property type="term" value="P:mRNA transport"/>
    <property type="evidence" value="ECO:0000318"/>
    <property type="project" value="GO_Central"/>
</dbReference>
<dbReference type="DisProt" id="DP00144"/>
<dbReference type="FunFam" id="1.10.8.1120:FF:000001">
    <property type="entry name" value="Histone RNA hairpin-binding protein-like"/>
    <property type="match status" value="1"/>
</dbReference>
<dbReference type="Gene3D" id="1.10.8.1120">
    <property type="entry name" value="Histone RNA hairpin-binding protein RNA-binding domain"/>
    <property type="match status" value="1"/>
</dbReference>
<dbReference type="InterPro" id="IPR026502">
    <property type="entry name" value="SLBP1/SLBP2"/>
</dbReference>
<dbReference type="InterPro" id="IPR029344">
    <property type="entry name" value="SLBP_RNA_bind"/>
</dbReference>
<dbReference type="InterPro" id="IPR038294">
    <property type="entry name" value="SLBP_RNA_bind_sf"/>
</dbReference>
<dbReference type="PANTHER" id="PTHR17408">
    <property type="entry name" value="HISTONE RNA HAIRPIN-BINDING PROTEIN"/>
    <property type="match status" value="1"/>
</dbReference>
<dbReference type="PANTHER" id="PTHR17408:SF0">
    <property type="entry name" value="HISTONE RNA HAIRPIN-BINDING PROTEIN"/>
    <property type="match status" value="1"/>
</dbReference>
<dbReference type="Pfam" id="PF15247">
    <property type="entry name" value="SLBP_RNA_bind"/>
    <property type="match status" value="1"/>
</dbReference>
<name>SLBP_DROME</name>